<organism>
    <name type="scientific">Rattus norvegicus</name>
    <name type="common">Rat</name>
    <dbReference type="NCBI Taxonomy" id="10116"/>
    <lineage>
        <taxon>Eukaryota</taxon>
        <taxon>Metazoa</taxon>
        <taxon>Chordata</taxon>
        <taxon>Craniata</taxon>
        <taxon>Vertebrata</taxon>
        <taxon>Euteleostomi</taxon>
        <taxon>Mammalia</taxon>
        <taxon>Eutheria</taxon>
        <taxon>Euarchontoglires</taxon>
        <taxon>Glires</taxon>
        <taxon>Rodentia</taxon>
        <taxon>Myomorpha</taxon>
        <taxon>Muroidea</taxon>
        <taxon>Muridae</taxon>
        <taxon>Murinae</taxon>
        <taxon>Rattus</taxon>
    </lineage>
</organism>
<keyword id="KW-0963">Cytoplasm</keyword>
<keyword id="KW-0238">DNA-binding</keyword>
<keyword id="KW-0479">Metal-binding</keyword>
<keyword id="KW-0539">Nucleus</keyword>
<keyword id="KW-0597">Phosphoprotein</keyword>
<keyword id="KW-1185">Reference proteome</keyword>
<keyword id="KW-0804">Transcription</keyword>
<keyword id="KW-0805">Transcription regulation</keyword>
<keyword id="KW-0808">Transferase</keyword>
<keyword id="KW-0833">Ubl conjugation pathway</keyword>
<keyword id="KW-0862">Zinc</keyword>
<keyword id="KW-0863">Zinc-finger</keyword>
<sequence>MPQSSPSTAATASDMDKNSGSNSSSASSGSSKGQQPPRSASAGPAGESKPKSDGKNSNGSKRYNRKREPSYPKNENFSNQSRRSNSQKSKTFNKTPPQRGGGSSKPFSSSSNGGRRDEVAEAQRAEFSPAQFSGPKKINLNHLLNFTFEPRGQAGHFEGSGHGSWGKRNKWGHKPFNKELFLQANCQFVVSEDQDYTANFADPDTLVNWDFVEQVRICSHEVPSCPICLYPPTAAKITRCGHIFCWACILHYLSLSERTWSKCPICYSSVHKKDLKSVVATESRQYVVGDTITMQLMKREKGVLVALPKSKWMNVDHPISLGDEQHSQYSKLLLASKEQVLHRVVLEEKVALEQQLAEEKHTPESCFIEAALQEVKIREEALSGVAGGRAEVTGVVTALEQLVLMAPLAKESAFQPRKGVLEYLSAFDEEAAQVCSLDPPGPLALPLVEEEEAVSEPEACEDLIADDSLGEGTVCAELSQEEPIAKPGFTQLSSSPCYYFYQAEDGQHMFLHPVNVRCLVREYGSLEQSPEKISATVVEIAGYSMSEDVRQRHRYLSHLPLTCEFSICELALQPPVVSKETLEMFSDDIEKRKRQRQKKAREERRRERRIELEENKRQGRYPEVHIPLENLQQFPAFNSYTCSSDSALGPTSTEGHGALSLSPLSRSPGSHADFLLTPLSPTASQGSPSFCVGSLEEDSPFLSFAQMLRVGKAKADGWPKAAPKKDDNSLAPPAPVDSDGESDNSDRVPVPSFQNSFSQAIEAAFMKLDTPATSDPLSDRGGRKRKRQKQKLLFSTSVVHTK</sequence>
<gene>
    <name evidence="5 7" type="primary">Rnf10</name>
</gene>
<evidence type="ECO:0000250" key="1">
    <source>
        <dbReference type="UniProtKB" id="Q8N5U6"/>
    </source>
</evidence>
<evidence type="ECO:0000255" key="2">
    <source>
        <dbReference type="PROSITE-ProRule" id="PRU00175"/>
    </source>
</evidence>
<evidence type="ECO:0000256" key="3">
    <source>
        <dbReference type="SAM" id="MobiDB-lite"/>
    </source>
</evidence>
<evidence type="ECO:0000269" key="4">
    <source>
    </source>
</evidence>
<evidence type="ECO:0000303" key="5">
    <source>
    </source>
</evidence>
<evidence type="ECO:0000305" key="6"/>
<evidence type="ECO:0000312" key="7">
    <source>
        <dbReference type="RGD" id="1309282"/>
    </source>
</evidence>
<feature type="chain" id="PRO_0000259587" description="E3 ubiquitin-protein ligase RNF10">
    <location>
        <begin position="1"/>
        <end position="802"/>
    </location>
</feature>
<feature type="zinc finger region" description="RING-type" evidence="2">
    <location>
        <begin position="225"/>
        <end position="267"/>
    </location>
</feature>
<feature type="region of interest" description="Disordered" evidence="3">
    <location>
        <begin position="1"/>
        <end position="134"/>
    </location>
</feature>
<feature type="region of interest" description="Disordered" evidence="3">
    <location>
        <begin position="645"/>
        <end position="664"/>
    </location>
</feature>
<feature type="region of interest" description="Disordered" evidence="3">
    <location>
        <begin position="716"/>
        <end position="753"/>
    </location>
</feature>
<feature type="region of interest" description="Disordered" evidence="3">
    <location>
        <begin position="767"/>
        <end position="802"/>
    </location>
</feature>
<feature type="compositionally biased region" description="Low complexity" evidence="3">
    <location>
        <begin position="1"/>
        <end position="31"/>
    </location>
</feature>
<feature type="compositionally biased region" description="Low complexity" evidence="3">
    <location>
        <begin position="78"/>
        <end position="90"/>
    </location>
</feature>
<feature type="compositionally biased region" description="Low complexity" evidence="3">
    <location>
        <begin position="104"/>
        <end position="113"/>
    </location>
</feature>
<feature type="compositionally biased region" description="Basic and acidic residues" evidence="3">
    <location>
        <begin position="114"/>
        <end position="124"/>
    </location>
</feature>
<feature type="compositionally biased region" description="Polar residues" evidence="3">
    <location>
        <begin position="645"/>
        <end position="654"/>
    </location>
</feature>
<feature type="compositionally biased region" description="Basic and acidic residues" evidence="3">
    <location>
        <begin position="716"/>
        <end position="728"/>
    </location>
</feature>
<feature type="compositionally biased region" description="Polar residues" evidence="3">
    <location>
        <begin position="793"/>
        <end position="802"/>
    </location>
</feature>
<feature type="modified residue" description="Phosphoserine" evidence="1">
    <location>
        <position position="5"/>
    </location>
</feature>
<feature type="modified residue" description="Phosphoserine" evidence="1">
    <location>
        <position position="110"/>
    </location>
</feature>
<feature type="modified residue" description="Phosphoserine" evidence="1">
    <location>
        <position position="128"/>
    </location>
</feature>
<accession>Q5XI59</accession>
<proteinExistence type="evidence at transcript level"/>
<comment type="function">
    <text evidence="1 4">E3 ubiquitin-protein ligase that catalyzes monoubiquitination of 40S ribosomal proteins RPS2/us5 and RPS3/us3 in response to ribosome stalling. Part of a ribosome quality control that takes place when ribosomes have stalled during translation initiation (iRQC): RNF10 acts by mediating monoubiquitination of RPS2/us5 and RPS3/us3, promoting their degradation by the proteasome. Also promotes ubiquitination of 40S ribosomal proteins in response to ribosome stalling during translation elongation. The action of RNF10 in iRQC is counteracted by USP10 (By similarity). May also act as a transcriptional factor involved in the regulation of MAG (Myelin-associated glycoprotein) expression (PubMed:18941509). Acts as a regulator of Schwann cell differentiation and myelination (PubMed:18941509).</text>
</comment>
<comment type="catalytic activity">
    <reaction evidence="1">
        <text>S-ubiquitinyl-[E2 ubiquitin-conjugating enzyme]-L-cysteine + [acceptor protein]-L-lysine = [E2 ubiquitin-conjugating enzyme]-L-cysteine + N(6)-ubiquitinyl-[acceptor protein]-L-lysine.</text>
        <dbReference type="EC" id="2.3.2.27"/>
    </reaction>
</comment>
<comment type="pathway">
    <text evidence="1">Protein modification; protein ubiquitination.</text>
</comment>
<comment type="subunit">
    <text evidence="1">Interacts with MEOX2.</text>
</comment>
<comment type="subcellular location">
    <subcellularLocation>
        <location evidence="1">Cytoplasm</location>
    </subcellularLocation>
    <subcellularLocation>
        <location evidence="4">Nucleus</location>
    </subcellularLocation>
</comment>
<comment type="similarity">
    <text evidence="6">Belongs to the RNF10 family.</text>
</comment>
<protein>
    <recommendedName>
        <fullName evidence="6">E3 ubiquitin-protein ligase RNF10</fullName>
        <ecNumber evidence="1">2.3.2.27</ecNumber>
    </recommendedName>
    <alternativeName>
        <fullName evidence="5">RING finger protein 10</fullName>
    </alternativeName>
</protein>
<name>RNF10_RAT</name>
<reference key="1">
    <citation type="journal article" date="2004" name="Genome Res.">
        <title>The status, quality, and expansion of the NIH full-length cDNA project: the Mammalian Gene Collection (MGC).</title>
        <authorList>
            <consortium name="The MGC Project Team"/>
        </authorList>
    </citation>
    <scope>NUCLEOTIDE SEQUENCE [LARGE SCALE MRNA]</scope>
    <source>
        <tissue>Testis</tissue>
    </source>
</reference>
<reference key="2">
    <citation type="journal article" date="2008" name="PLoS ONE">
        <title>A novel function of RING finger protein 10 in transcriptional regulation of the myelin-associated glycoprotein gene and myelin formation in Schwann cells.</title>
        <authorList>
            <person name="Hoshikawa S."/>
            <person name="Ogata T."/>
            <person name="Fujiwara S."/>
            <person name="Nakamura K."/>
            <person name="Tanaka S."/>
        </authorList>
    </citation>
    <scope>FUNCTION</scope>
    <scope>SUBCELLULAR LOCATION</scope>
</reference>
<dbReference type="EC" id="2.3.2.27" evidence="1"/>
<dbReference type="EMBL" id="BC083831">
    <property type="protein sequence ID" value="AAH83831.1"/>
    <property type="molecule type" value="mRNA"/>
</dbReference>
<dbReference type="RefSeq" id="NP_001011904.1">
    <property type="nucleotide sequence ID" value="NM_001011904.2"/>
</dbReference>
<dbReference type="FunCoup" id="Q5XI59">
    <property type="interactions" value="2866"/>
</dbReference>
<dbReference type="STRING" id="10116.ENSRNOP00000063855"/>
<dbReference type="GlyGen" id="Q5XI59">
    <property type="glycosylation" value="1 site"/>
</dbReference>
<dbReference type="PhosphoSitePlus" id="Q5XI59"/>
<dbReference type="PaxDb" id="10116-ENSRNOP00000063855"/>
<dbReference type="Ensembl" id="ENSRNOT00000064910.3">
    <property type="protein sequence ID" value="ENSRNOP00000063855.3"/>
    <property type="gene ID" value="ENSRNOG00000001172.8"/>
</dbReference>
<dbReference type="GeneID" id="288710"/>
<dbReference type="KEGG" id="rno:288710"/>
<dbReference type="UCSC" id="RGD:1309282">
    <property type="organism name" value="rat"/>
</dbReference>
<dbReference type="AGR" id="RGD:1309282"/>
<dbReference type="CTD" id="9921"/>
<dbReference type="RGD" id="1309282">
    <property type="gene designation" value="Rnf10"/>
</dbReference>
<dbReference type="eggNOG" id="KOG2164">
    <property type="taxonomic scope" value="Eukaryota"/>
</dbReference>
<dbReference type="GeneTree" id="ENSGT00390000001731"/>
<dbReference type="HOGENOM" id="CLU_018206_0_0_1"/>
<dbReference type="InParanoid" id="Q5XI59"/>
<dbReference type="OMA" id="PRWKKCP"/>
<dbReference type="UniPathway" id="UPA00143"/>
<dbReference type="PRO" id="PR:Q5XI59"/>
<dbReference type="Proteomes" id="UP000002494">
    <property type="component" value="Chromosome 12"/>
</dbReference>
<dbReference type="GO" id="GO:0005737">
    <property type="term" value="C:cytoplasm"/>
    <property type="evidence" value="ECO:0000266"/>
    <property type="project" value="RGD"/>
</dbReference>
<dbReference type="GO" id="GO:0022626">
    <property type="term" value="C:cytosolic ribosome"/>
    <property type="evidence" value="ECO:0000266"/>
    <property type="project" value="RGD"/>
</dbReference>
<dbReference type="GO" id="GO:0099147">
    <property type="term" value="C:extrinsic component of postsynaptic density membrane"/>
    <property type="evidence" value="ECO:0000314"/>
    <property type="project" value="SynGO"/>
</dbReference>
<dbReference type="GO" id="GO:0098978">
    <property type="term" value="C:glutamatergic synapse"/>
    <property type="evidence" value="ECO:0000314"/>
    <property type="project" value="SynGO"/>
</dbReference>
<dbReference type="GO" id="GO:0005634">
    <property type="term" value="C:nucleus"/>
    <property type="evidence" value="ECO:0000314"/>
    <property type="project" value="UniProtKB"/>
</dbReference>
<dbReference type="GO" id="GO:0000976">
    <property type="term" value="F:transcription cis-regulatory region binding"/>
    <property type="evidence" value="ECO:0000314"/>
    <property type="project" value="UniProtKB"/>
</dbReference>
<dbReference type="GO" id="GO:0061630">
    <property type="term" value="F:ubiquitin protein ligase activity"/>
    <property type="evidence" value="ECO:0000250"/>
    <property type="project" value="UniProtKB"/>
</dbReference>
<dbReference type="GO" id="GO:0008270">
    <property type="term" value="F:zinc ion binding"/>
    <property type="evidence" value="ECO:0007669"/>
    <property type="project" value="UniProtKB-KW"/>
</dbReference>
<dbReference type="GO" id="GO:0010626">
    <property type="term" value="P:negative regulation of Schwann cell proliferation"/>
    <property type="evidence" value="ECO:0000314"/>
    <property type="project" value="UniProtKB"/>
</dbReference>
<dbReference type="GO" id="GO:0045893">
    <property type="term" value="P:positive regulation of DNA-templated transcription"/>
    <property type="evidence" value="ECO:0000266"/>
    <property type="project" value="RGD"/>
</dbReference>
<dbReference type="GO" id="GO:0031643">
    <property type="term" value="P:positive regulation of myelination"/>
    <property type="evidence" value="ECO:0000315"/>
    <property type="project" value="UniProtKB"/>
</dbReference>
<dbReference type="GO" id="GO:0045944">
    <property type="term" value="P:positive regulation of transcription by RNA polymerase II"/>
    <property type="evidence" value="ECO:0000314"/>
    <property type="project" value="UniProtKB"/>
</dbReference>
<dbReference type="GO" id="GO:0099527">
    <property type="term" value="P:postsynapse to nucleus signaling pathway"/>
    <property type="evidence" value="ECO:0000314"/>
    <property type="project" value="SynGO"/>
</dbReference>
<dbReference type="GO" id="GO:0051865">
    <property type="term" value="P:protein autoubiquitination"/>
    <property type="evidence" value="ECO:0000266"/>
    <property type="project" value="RGD"/>
</dbReference>
<dbReference type="GO" id="GO:0006513">
    <property type="term" value="P:protein monoubiquitination"/>
    <property type="evidence" value="ECO:0000250"/>
    <property type="project" value="UniProtKB"/>
</dbReference>
<dbReference type="GO" id="GO:1990116">
    <property type="term" value="P:ribosome-associated ubiquitin-dependent protein catabolic process"/>
    <property type="evidence" value="ECO:0000250"/>
    <property type="project" value="UniProtKB"/>
</dbReference>
<dbReference type="CDD" id="cd16536">
    <property type="entry name" value="RING-HC_RNF10"/>
    <property type="match status" value="1"/>
</dbReference>
<dbReference type="FunFam" id="3.30.40.10:FF:000112">
    <property type="entry name" value="RING finger protein 10"/>
    <property type="match status" value="1"/>
</dbReference>
<dbReference type="Gene3D" id="3.30.40.10">
    <property type="entry name" value="Zinc/RING finger domain, C3HC4 (zinc finger)"/>
    <property type="match status" value="1"/>
</dbReference>
<dbReference type="InterPro" id="IPR039739">
    <property type="entry name" value="MAG2/RNF10"/>
</dbReference>
<dbReference type="InterPro" id="IPR018957">
    <property type="entry name" value="Znf_C3HC4_RING-type"/>
</dbReference>
<dbReference type="InterPro" id="IPR001841">
    <property type="entry name" value="Znf_RING"/>
</dbReference>
<dbReference type="InterPro" id="IPR013083">
    <property type="entry name" value="Znf_RING/FYVE/PHD"/>
</dbReference>
<dbReference type="InterPro" id="IPR017907">
    <property type="entry name" value="Znf_RING_CS"/>
</dbReference>
<dbReference type="PANTHER" id="PTHR12983:SF9">
    <property type="entry name" value="E3 UBIQUITIN-PROTEIN LIGASE RNF10"/>
    <property type="match status" value="1"/>
</dbReference>
<dbReference type="PANTHER" id="PTHR12983">
    <property type="entry name" value="RING FINGER 10 FAMILY MEMBER"/>
    <property type="match status" value="1"/>
</dbReference>
<dbReference type="Pfam" id="PF00097">
    <property type="entry name" value="zf-C3HC4"/>
    <property type="match status" value="1"/>
</dbReference>
<dbReference type="SMART" id="SM00184">
    <property type="entry name" value="RING"/>
    <property type="match status" value="1"/>
</dbReference>
<dbReference type="SUPFAM" id="SSF57850">
    <property type="entry name" value="RING/U-box"/>
    <property type="match status" value="1"/>
</dbReference>
<dbReference type="PROSITE" id="PS00518">
    <property type="entry name" value="ZF_RING_1"/>
    <property type="match status" value="1"/>
</dbReference>
<dbReference type="PROSITE" id="PS50089">
    <property type="entry name" value="ZF_RING_2"/>
    <property type="match status" value="1"/>
</dbReference>